<accession>Q5PU89</accession>
<name>UFM1_CHLIN</name>
<keyword id="KW-1017">Isopeptide bond</keyword>
<keyword id="KW-0833">Ubl conjugation pathway</keyword>
<protein>
    <recommendedName>
        <fullName>Ubiquitin-fold modifier 1</fullName>
    </recommendedName>
    <alternativeName>
        <fullName>Protein PR46A</fullName>
    </alternativeName>
</protein>
<reference key="1">
    <citation type="submission" date="2004-11" db="EMBL/GenBank/DDBJ databases">
        <title>Transcriptional analysis of the chlamydomonas mating-type locus.</title>
        <authorList>
            <person name="Ferris P.J."/>
            <person name="Small L."/>
            <person name="Goodenough U.W."/>
        </authorList>
    </citation>
    <scope>NUCLEOTIDE SEQUENCE [GENOMIC DNA]</scope>
    <source>
        <strain>CC-1870</strain>
    </source>
</reference>
<gene>
    <name type="primary">PR46a</name>
</gene>
<organism>
    <name type="scientific">Chlamydomonas incerta</name>
    <dbReference type="NCBI Taxonomy" id="51695"/>
    <lineage>
        <taxon>Eukaryota</taxon>
        <taxon>Viridiplantae</taxon>
        <taxon>Chlorophyta</taxon>
        <taxon>core chlorophytes</taxon>
        <taxon>Chlorophyceae</taxon>
        <taxon>CS clade</taxon>
        <taxon>Chlamydomonadales</taxon>
        <taxon>Chlamydomonadaceae</taxon>
        <taxon>Chlamydomonas</taxon>
    </lineage>
</organism>
<dbReference type="EMBL" id="AY825028">
    <property type="protein sequence ID" value="AAV71156.1"/>
    <property type="molecule type" value="Genomic_DNA"/>
</dbReference>
<dbReference type="SMR" id="Q5PU89"/>
<dbReference type="OrthoDB" id="284357at2759"/>
<dbReference type="GO" id="GO:0005737">
    <property type="term" value="C:cytoplasm"/>
    <property type="evidence" value="ECO:0007669"/>
    <property type="project" value="TreeGrafter"/>
</dbReference>
<dbReference type="GO" id="GO:0005634">
    <property type="term" value="C:nucleus"/>
    <property type="evidence" value="ECO:0007669"/>
    <property type="project" value="TreeGrafter"/>
</dbReference>
<dbReference type="GO" id="GO:1990592">
    <property type="term" value="P:protein K69-linked ufmylation"/>
    <property type="evidence" value="ECO:0007669"/>
    <property type="project" value="TreeGrafter"/>
</dbReference>
<dbReference type="CDD" id="cd01766">
    <property type="entry name" value="Ubl_UFM1"/>
    <property type="match status" value="1"/>
</dbReference>
<dbReference type="FunFam" id="3.10.20.90:FF:000044">
    <property type="entry name" value="Ubiquitin-fold modifier 1"/>
    <property type="match status" value="1"/>
</dbReference>
<dbReference type="Gene3D" id="3.10.20.90">
    <property type="entry name" value="Phosphatidylinositol 3-kinase Catalytic Subunit, Chain A, domain 1"/>
    <property type="match status" value="1"/>
</dbReference>
<dbReference type="InterPro" id="IPR029071">
    <property type="entry name" value="Ubiquitin-like_domsf"/>
</dbReference>
<dbReference type="InterPro" id="IPR005375">
    <property type="entry name" value="UFM1"/>
</dbReference>
<dbReference type="PANTHER" id="PTHR15825">
    <property type="entry name" value="UBIQUITIN-FOLD MODIFIER 1"/>
    <property type="match status" value="1"/>
</dbReference>
<dbReference type="PANTHER" id="PTHR15825:SF0">
    <property type="entry name" value="UBIQUITIN-FOLD MODIFIER 1"/>
    <property type="match status" value="1"/>
</dbReference>
<dbReference type="Pfam" id="PF03671">
    <property type="entry name" value="Ufm1"/>
    <property type="match status" value="1"/>
</dbReference>
<dbReference type="PIRSF" id="PIRSF038027">
    <property type="entry name" value="Ubiquitin-like_Ufm1"/>
    <property type="match status" value="1"/>
</dbReference>
<dbReference type="SUPFAM" id="SSF54236">
    <property type="entry name" value="Ubiquitin-like"/>
    <property type="match status" value="1"/>
</dbReference>
<sequence length="99" mass="10610">MSQQTTPAPGVTKVTFKVTLTSDPKLPFRVFSVPEEAPFTAVLKFAAEEFKVPAQTSAIITNDGVGINPQQTAGNVFLKHGSELRLIPRDRVGGSSLAR</sequence>
<feature type="chain" id="PRO_0000042144" description="Ubiquitin-fold modifier 1">
    <location>
        <begin position="1"/>
        <end position="93"/>
    </location>
</feature>
<feature type="propeptide" id="PRO_0000042145" description="Removed in mature form" evidence="1">
    <location>
        <begin position="94"/>
        <end position="99"/>
    </location>
</feature>
<feature type="cross-link" description="Glycyl lysine isopeptide (Gly-Lys) (interchain with K-? in acceptor proteins)" evidence="2">
    <location>
        <position position="93"/>
    </location>
</feature>
<evidence type="ECO:0000250" key="1"/>
<evidence type="ECO:0000255" key="2"/>
<evidence type="ECO:0000305" key="3"/>
<comment type="function">
    <text evidence="1">Ubiquitin-like modifier protein which binds to a number of as yet unidentified target proteins.</text>
</comment>
<comment type="similarity">
    <text evidence="3">Belongs to the UFM1 family.</text>
</comment>
<proteinExistence type="inferred from homology"/>